<dbReference type="EMBL" id="CM002236">
    <property type="protein sequence ID" value="EAA34638.1"/>
    <property type="molecule type" value="Genomic_DNA"/>
</dbReference>
<dbReference type="SMR" id="Q7SD11"/>
<dbReference type="FunCoup" id="Q7SD11">
    <property type="interactions" value="743"/>
</dbReference>
<dbReference type="STRING" id="367110.Q7SD11"/>
<dbReference type="PaxDb" id="5141-EFNCRP00000009619"/>
<dbReference type="EnsemblFungi" id="EAA34638">
    <property type="protein sequence ID" value="EAA34638"/>
    <property type="gene ID" value="NCU08115"/>
</dbReference>
<dbReference type="KEGG" id="ncr:NCU08115"/>
<dbReference type="VEuPathDB" id="FungiDB:NCU08115"/>
<dbReference type="HOGENOM" id="CLU_002472_0_0_1"/>
<dbReference type="InParanoid" id="Q7SD11"/>
<dbReference type="OMA" id="INMHAAR"/>
<dbReference type="OrthoDB" id="121051at2759"/>
<dbReference type="Proteomes" id="UP000001805">
    <property type="component" value="Chromosome 1, Linkage Group I"/>
</dbReference>
<dbReference type="GO" id="GO:0005634">
    <property type="term" value="C:nucleus"/>
    <property type="evidence" value="ECO:0000318"/>
    <property type="project" value="GO_Central"/>
</dbReference>
<dbReference type="GO" id="GO:0005524">
    <property type="term" value="F:ATP binding"/>
    <property type="evidence" value="ECO:0007669"/>
    <property type="project" value="UniProtKB-KW"/>
</dbReference>
<dbReference type="GO" id="GO:0140664">
    <property type="term" value="F:ATP-dependent DNA damage sensor activity"/>
    <property type="evidence" value="ECO:0007669"/>
    <property type="project" value="InterPro"/>
</dbReference>
<dbReference type="GO" id="GO:0003690">
    <property type="term" value="F:double-stranded DNA binding"/>
    <property type="evidence" value="ECO:0000318"/>
    <property type="project" value="GO_Central"/>
</dbReference>
<dbReference type="GO" id="GO:0030983">
    <property type="term" value="F:mismatched DNA binding"/>
    <property type="evidence" value="ECO:0007669"/>
    <property type="project" value="InterPro"/>
</dbReference>
<dbReference type="GO" id="GO:0006298">
    <property type="term" value="P:mismatch repair"/>
    <property type="evidence" value="ECO:0000318"/>
    <property type="project" value="GO_Central"/>
</dbReference>
<dbReference type="GO" id="GO:0006312">
    <property type="term" value="P:mitotic recombination"/>
    <property type="evidence" value="ECO:0000318"/>
    <property type="project" value="GO_Central"/>
</dbReference>
<dbReference type="FunFam" id="3.30.420.110:FF:000008">
    <property type="entry name" value="DNA mismatch repair protein"/>
    <property type="match status" value="1"/>
</dbReference>
<dbReference type="FunFam" id="3.40.1170.10:FF:000006">
    <property type="entry name" value="DNA mismatch repair protein"/>
    <property type="match status" value="1"/>
</dbReference>
<dbReference type="FunFam" id="1.10.1420.10:FF:000004">
    <property type="entry name" value="DNA mismatch repair protein Msh3"/>
    <property type="match status" value="1"/>
</dbReference>
<dbReference type="Gene3D" id="1.10.1420.10">
    <property type="match status" value="2"/>
</dbReference>
<dbReference type="Gene3D" id="3.40.1170.10">
    <property type="entry name" value="DNA repair protein MutS, domain I"/>
    <property type="match status" value="1"/>
</dbReference>
<dbReference type="Gene3D" id="3.30.420.110">
    <property type="entry name" value="MutS, connector domain"/>
    <property type="match status" value="1"/>
</dbReference>
<dbReference type="Gene3D" id="3.40.50.300">
    <property type="entry name" value="P-loop containing nucleotide triphosphate hydrolases"/>
    <property type="match status" value="1"/>
</dbReference>
<dbReference type="InterPro" id="IPR007695">
    <property type="entry name" value="DNA_mismatch_repair_MutS-lik_N"/>
</dbReference>
<dbReference type="InterPro" id="IPR017261">
    <property type="entry name" value="DNA_mismatch_repair_MutS/MSH"/>
</dbReference>
<dbReference type="InterPro" id="IPR000432">
    <property type="entry name" value="DNA_mismatch_repair_MutS_C"/>
</dbReference>
<dbReference type="InterPro" id="IPR007861">
    <property type="entry name" value="DNA_mismatch_repair_MutS_clamp"/>
</dbReference>
<dbReference type="InterPro" id="IPR007696">
    <property type="entry name" value="DNA_mismatch_repair_MutS_core"/>
</dbReference>
<dbReference type="InterPro" id="IPR016151">
    <property type="entry name" value="DNA_mismatch_repair_MutS_N"/>
</dbReference>
<dbReference type="InterPro" id="IPR036187">
    <property type="entry name" value="DNA_mismatch_repair_MutS_sf"/>
</dbReference>
<dbReference type="InterPro" id="IPR007860">
    <property type="entry name" value="DNA_mmatch_repair_MutS_con_dom"/>
</dbReference>
<dbReference type="InterPro" id="IPR045076">
    <property type="entry name" value="MutS"/>
</dbReference>
<dbReference type="InterPro" id="IPR036678">
    <property type="entry name" value="MutS_con_dom_sf"/>
</dbReference>
<dbReference type="InterPro" id="IPR027417">
    <property type="entry name" value="P-loop_NTPase"/>
</dbReference>
<dbReference type="NCBIfam" id="NF003810">
    <property type="entry name" value="PRK05399.1"/>
    <property type="match status" value="1"/>
</dbReference>
<dbReference type="PANTHER" id="PTHR11361:SF122">
    <property type="entry name" value="DNA MISMATCH REPAIR PROTEIN MSH3"/>
    <property type="match status" value="1"/>
</dbReference>
<dbReference type="PANTHER" id="PTHR11361">
    <property type="entry name" value="DNA MISMATCH REPAIR PROTEIN MUTS FAMILY MEMBER"/>
    <property type="match status" value="1"/>
</dbReference>
<dbReference type="Pfam" id="PF01624">
    <property type="entry name" value="MutS_I"/>
    <property type="match status" value="1"/>
</dbReference>
<dbReference type="Pfam" id="PF05188">
    <property type="entry name" value="MutS_II"/>
    <property type="match status" value="1"/>
</dbReference>
<dbReference type="Pfam" id="PF05192">
    <property type="entry name" value="MutS_III"/>
    <property type="match status" value="1"/>
</dbReference>
<dbReference type="Pfam" id="PF05190">
    <property type="entry name" value="MutS_IV"/>
    <property type="match status" value="1"/>
</dbReference>
<dbReference type="Pfam" id="PF00488">
    <property type="entry name" value="MutS_V"/>
    <property type="match status" value="1"/>
</dbReference>
<dbReference type="PIRSF" id="PIRSF037677">
    <property type="entry name" value="DNA_mis_repair_Msh6"/>
    <property type="match status" value="1"/>
</dbReference>
<dbReference type="SMART" id="SM00534">
    <property type="entry name" value="MUTSac"/>
    <property type="match status" value="1"/>
</dbReference>
<dbReference type="SMART" id="SM00533">
    <property type="entry name" value="MUTSd"/>
    <property type="match status" value="1"/>
</dbReference>
<dbReference type="SUPFAM" id="SSF55271">
    <property type="entry name" value="DNA repair protein MutS, domain I"/>
    <property type="match status" value="1"/>
</dbReference>
<dbReference type="SUPFAM" id="SSF48334">
    <property type="entry name" value="DNA repair protein MutS, domain III"/>
    <property type="match status" value="1"/>
</dbReference>
<dbReference type="SUPFAM" id="SSF52540">
    <property type="entry name" value="P-loop containing nucleoside triphosphate hydrolases"/>
    <property type="match status" value="1"/>
</dbReference>
<dbReference type="PROSITE" id="PS00486">
    <property type="entry name" value="DNA_MISMATCH_REPAIR_2"/>
    <property type="match status" value="1"/>
</dbReference>
<organism>
    <name type="scientific">Neurospora crassa (strain ATCC 24698 / 74-OR23-1A / CBS 708.71 / DSM 1257 / FGSC 987)</name>
    <dbReference type="NCBI Taxonomy" id="367110"/>
    <lineage>
        <taxon>Eukaryota</taxon>
        <taxon>Fungi</taxon>
        <taxon>Dikarya</taxon>
        <taxon>Ascomycota</taxon>
        <taxon>Pezizomycotina</taxon>
        <taxon>Sordariomycetes</taxon>
        <taxon>Sordariomycetidae</taxon>
        <taxon>Sordariales</taxon>
        <taxon>Sordariaceae</taxon>
        <taxon>Neurospora</taxon>
    </lineage>
</organism>
<comment type="function">
    <text evidence="1">Component of the post-replicative DNA mismatch repair system (MMR). Heterodimerizes with msh-2 to form MutS beta, which binds to DNA mismatches thereby initiating DNA repair. Msh-3 provides substrate-binding and substrate specificity to the complex. When bound, the MutS beta heterodimer bends the DNA helix and shields approximately 20 base pairs. Acts mainly to repair insertion-deletion loops (IDLs) from 2 to 13 nucleotides in size, but can also repair base-base and single insertion-deletion mismatches that occur during replication. After mismatch binding, forms a ternary complex with the MutL alpha heterodimer, which is thought to be responsible for directing the downstream MMR events, including strand discrimination, excision, and resynthesis. ATP binding and hydrolysis play a pivotal role in mismatch repair functions (By similarity).</text>
</comment>
<comment type="subunit">
    <text evidence="1">Heterodimer consisting of msh-2-msh-3 (MutS beta). Forms a ternary complex with MutL alpha (mlh-1-pms-1) (By similarity).</text>
</comment>
<comment type="subcellular location">
    <subcellularLocation>
        <location evidence="1">Nucleus</location>
    </subcellularLocation>
</comment>
<comment type="similarity">
    <text evidence="4">Belongs to the DNA mismatch repair MutS family. MSH3 subfamily.</text>
</comment>
<sequence length="1145" mass="125692">MAGPSRLPDKKQASISSFFTPRNTSPLVNLSQNASKKPPPAESKSSKSTSSRKRPEPQTDDSEDDVPRDAKRRRSNGPSAATDTEDAVASLKLSSSSRTERYALNSSRPSQDEQEKEEDVAERKKKEELHRKFVKKLGHPDSMFSYRQRDTESAAVEGEGEEGEDDEEEPAPKTTAKKKGAKTGKLTPMELQFLEIKRKHMDTLLIVEVGYKFRFFGEDARIAARELSIVCIPGKFRYDEHPSEAHLDRFASASIPVHRLPVHAKRLVAAGYKVGVVRQIETAALKKAGDNRNAPFVRKLTNVYTKGTYIDETGELDQPGETTGASSGGYLLCLTETPAKGMGTDEKVNVGIIAVQPATGDIIYDEFEDGFMRREIETRLLHISPCEFLIVGDLSKATDKLIQHLSGSSTNVFGDKSRVERVPKSKTMAAESYSNVTDFYAGKAKDSDERSAALLNKVLKLPEAVMICLSAMITHLTEYGLQHIFDLTKYFQSFSTRQHMLINGTTLESLEVYRNATDHSEKGSLLWALDKTHTRFGQRLLRKWIGRPLLDQQRLEERVSAVEELLNNQSTAKVDKLVNMLKSIKADLERSLIRIYYGKCTRPELLSTLQTLQKISFEYARVKSPADTGFSSTLLTSAIMTLPSISPMVTAHLSKINAEAARKDDKYAFFLEQHETEDISEHKLGIAAVEQDLDEHRSEAAKDLGKKVPVNYVTVAGIEYLIEVPNTDLKRVPASWAKISGTKKVSRFHTPTVLRLIAERDQHKESLASACDQAFSDLLSQIAGEYQPLRDAVSSLSTLDCLLSLSTVAALPGYTKPTFLPSSHPSFLSITEGRHPIAEHLLPNGYIPFTMSLGTLSSSASSPDPNPTSPSGKPALAQLITGPNMGGKSSYTRAVALLVLLAQIGSFVPATSMSLTLSDAIFTRMGARDNLFKGESTFMVEVSETAAILRQATPRSLVVLDELGRGTSTHDGRAIAGAVLEYVVRDVGCLMLFVTHYQDLAGVAEGLTVGEGEEKRRGVECVHMRFASNKSRTSMDDDAMEVDGDGDGQEGAGADKDEEEEITFLYDLAPGVAHRSYGLNVARLARIPRKVLEVAARKSSELEKEVRAKRIKGAMGLVGGVLYGGGAPGDQEEKLEQLVGLVEQL</sequence>
<accession>Q7SD11</accession>
<protein>
    <recommendedName>
        <fullName>DNA mismatch repair protein msh-3</fullName>
    </recommendedName>
    <alternativeName>
        <fullName>MutS protein homolog 3</fullName>
    </alternativeName>
</protein>
<evidence type="ECO:0000250" key="1"/>
<evidence type="ECO:0000255" key="2"/>
<evidence type="ECO:0000256" key="3">
    <source>
        <dbReference type="SAM" id="MobiDB-lite"/>
    </source>
</evidence>
<evidence type="ECO:0000305" key="4"/>
<gene>
    <name type="primary">msh-3</name>
    <name type="ORF">NCU08115</name>
</gene>
<reference key="1">
    <citation type="journal article" date="2003" name="Nature">
        <title>The genome sequence of the filamentous fungus Neurospora crassa.</title>
        <authorList>
            <person name="Galagan J.E."/>
            <person name="Calvo S.E."/>
            <person name="Borkovich K.A."/>
            <person name="Selker E.U."/>
            <person name="Read N.D."/>
            <person name="Jaffe D.B."/>
            <person name="FitzHugh W."/>
            <person name="Ma L.-J."/>
            <person name="Smirnov S."/>
            <person name="Purcell S."/>
            <person name="Rehman B."/>
            <person name="Elkins T."/>
            <person name="Engels R."/>
            <person name="Wang S."/>
            <person name="Nielsen C.B."/>
            <person name="Butler J."/>
            <person name="Endrizzi M."/>
            <person name="Qui D."/>
            <person name="Ianakiev P."/>
            <person name="Bell-Pedersen D."/>
            <person name="Nelson M.A."/>
            <person name="Werner-Washburne M."/>
            <person name="Selitrennikoff C.P."/>
            <person name="Kinsey J.A."/>
            <person name="Braun E.L."/>
            <person name="Zelter A."/>
            <person name="Schulte U."/>
            <person name="Kothe G.O."/>
            <person name="Jedd G."/>
            <person name="Mewes H.-W."/>
            <person name="Staben C."/>
            <person name="Marcotte E."/>
            <person name="Greenberg D."/>
            <person name="Roy A."/>
            <person name="Foley K."/>
            <person name="Naylor J."/>
            <person name="Stange-Thomann N."/>
            <person name="Barrett R."/>
            <person name="Gnerre S."/>
            <person name="Kamal M."/>
            <person name="Kamvysselis M."/>
            <person name="Mauceli E.W."/>
            <person name="Bielke C."/>
            <person name="Rudd S."/>
            <person name="Frishman D."/>
            <person name="Krystofova S."/>
            <person name="Rasmussen C."/>
            <person name="Metzenberg R.L."/>
            <person name="Perkins D.D."/>
            <person name="Kroken S."/>
            <person name="Cogoni C."/>
            <person name="Macino G."/>
            <person name="Catcheside D.E.A."/>
            <person name="Li W."/>
            <person name="Pratt R.J."/>
            <person name="Osmani S.A."/>
            <person name="DeSouza C.P.C."/>
            <person name="Glass N.L."/>
            <person name="Orbach M.J."/>
            <person name="Berglund J.A."/>
            <person name="Voelker R."/>
            <person name="Yarden O."/>
            <person name="Plamann M."/>
            <person name="Seiler S."/>
            <person name="Dunlap J.C."/>
            <person name="Radford A."/>
            <person name="Aramayo R."/>
            <person name="Natvig D.O."/>
            <person name="Alex L.A."/>
            <person name="Mannhaupt G."/>
            <person name="Ebbole D.J."/>
            <person name="Freitag M."/>
            <person name="Paulsen I."/>
            <person name="Sachs M.S."/>
            <person name="Lander E.S."/>
            <person name="Nusbaum C."/>
            <person name="Birren B.W."/>
        </authorList>
    </citation>
    <scope>NUCLEOTIDE SEQUENCE [LARGE SCALE GENOMIC DNA]</scope>
    <source>
        <strain>ATCC 24698 / 74-OR23-1A / CBS 708.71 / DSM 1257 / FGSC 987</strain>
    </source>
</reference>
<keyword id="KW-0067">ATP-binding</keyword>
<keyword id="KW-0227">DNA damage</keyword>
<keyword id="KW-0234">DNA repair</keyword>
<keyword id="KW-0238">DNA-binding</keyword>
<keyword id="KW-0547">Nucleotide-binding</keyword>
<keyword id="KW-0539">Nucleus</keyword>
<keyword id="KW-1185">Reference proteome</keyword>
<feature type="chain" id="PRO_0000338526" description="DNA mismatch repair protein msh-3">
    <location>
        <begin position="1"/>
        <end position="1145"/>
    </location>
</feature>
<feature type="region of interest" description="Disordered" evidence="3">
    <location>
        <begin position="1"/>
        <end position="183"/>
    </location>
</feature>
<feature type="region of interest" description="Mispair-binding domain" evidence="1">
    <location>
        <begin position="183"/>
        <end position="307"/>
    </location>
</feature>
<feature type="region of interest" description="Disordered" evidence="3">
    <location>
        <begin position="857"/>
        <end position="879"/>
    </location>
</feature>
<feature type="region of interest" description="Disordered" evidence="3">
    <location>
        <begin position="1030"/>
        <end position="1056"/>
    </location>
</feature>
<feature type="compositionally biased region" description="Polar residues" evidence="3">
    <location>
        <begin position="13"/>
        <end position="33"/>
    </location>
</feature>
<feature type="compositionally biased region" description="Basic and acidic residues" evidence="3">
    <location>
        <begin position="121"/>
        <end position="131"/>
    </location>
</feature>
<feature type="compositionally biased region" description="Acidic residues" evidence="3">
    <location>
        <begin position="158"/>
        <end position="169"/>
    </location>
</feature>
<feature type="compositionally biased region" description="Acidic residues" evidence="3">
    <location>
        <begin position="1036"/>
        <end position="1048"/>
    </location>
</feature>
<feature type="binding site" evidence="2">
    <location>
        <begin position="882"/>
        <end position="889"/>
    </location>
    <ligand>
        <name>ATP</name>
        <dbReference type="ChEBI" id="CHEBI:30616"/>
    </ligand>
</feature>
<proteinExistence type="inferred from homology"/>
<name>MSH3_NEUCR</name>